<evidence type="ECO:0000255" key="1">
    <source>
        <dbReference type="HAMAP-Rule" id="MF_00061"/>
    </source>
</evidence>
<reference key="1">
    <citation type="submission" date="2007-05" db="EMBL/GenBank/DDBJ databases">
        <title>Complete sequence of Thermotoga petrophila RKU-1.</title>
        <authorList>
            <consortium name="US DOE Joint Genome Institute"/>
            <person name="Copeland A."/>
            <person name="Lucas S."/>
            <person name="Lapidus A."/>
            <person name="Barry K."/>
            <person name="Glavina del Rio T."/>
            <person name="Dalin E."/>
            <person name="Tice H."/>
            <person name="Pitluck S."/>
            <person name="Sims D."/>
            <person name="Brettin T."/>
            <person name="Bruce D."/>
            <person name="Detter J.C."/>
            <person name="Han C."/>
            <person name="Tapia R."/>
            <person name="Schmutz J."/>
            <person name="Larimer F."/>
            <person name="Land M."/>
            <person name="Hauser L."/>
            <person name="Kyrpides N."/>
            <person name="Mikhailova N."/>
            <person name="Nelson K."/>
            <person name="Gogarten J.P."/>
            <person name="Noll K."/>
            <person name="Richardson P."/>
        </authorList>
    </citation>
    <scope>NUCLEOTIDE SEQUENCE [LARGE SCALE GENOMIC DNA]</scope>
    <source>
        <strain>ATCC BAA-488 / DSM 13995 / JCM 10881 / RKU-1</strain>
    </source>
</reference>
<feature type="chain" id="PRO_1000007899" description="4-diphosphocytidyl-2-C-methyl-D-erythritol kinase">
    <location>
        <begin position="1"/>
        <end position="271"/>
    </location>
</feature>
<feature type="active site" evidence="1">
    <location>
        <position position="17"/>
    </location>
</feature>
<feature type="active site" evidence="1">
    <location>
        <position position="137"/>
    </location>
</feature>
<feature type="binding site" evidence="1">
    <location>
        <begin position="97"/>
        <end position="107"/>
    </location>
    <ligand>
        <name>ATP</name>
        <dbReference type="ChEBI" id="CHEBI:30616"/>
    </ligand>
</feature>
<proteinExistence type="inferred from homology"/>
<keyword id="KW-0067">ATP-binding</keyword>
<keyword id="KW-0414">Isoprene biosynthesis</keyword>
<keyword id="KW-0418">Kinase</keyword>
<keyword id="KW-0547">Nucleotide-binding</keyword>
<keyword id="KW-0808">Transferase</keyword>
<organism>
    <name type="scientific">Thermotoga petrophila (strain ATCC BAA-488 / DSM 13995 / JCM 10881 / RKU-1)</name>
    <dbReference type="NCBI Taxonomy" id="390874"/>
    <lineage>
        <taxon>Bacteria</taxon>
        <taxon>Thermotogati</taxon>
        <taxon>Thermotogota</taxon>
        <taxon>Thermotogae</taxon>
        <taxon>Thermotogales</taxon>
        <taxon>Thermotogaceae</taxon>
        <taxon>Thermotoga</taxon>
    </lineage>
</organism>
<dbReference type="EC" id="2.7.1.148" evidence="1"/>
<dbReference type="EMBL" id="CP000702">
    <property type="protein sequence ID" value="ABQ47413.1"/>
    <property type="molecule type" value="Genomic_DNA"/>
</dbReference>
<dbReference type="RefSeq" id="WP_011943871.1">
    <property type="nucleotide sequence ID" value="NC_009486.1"/>
</dbReference>
<dbReference type="SMR" id="A5IMJ0"/>
<dbReference type="STRING" id="390874.Tpet_1400"/>
<dbReference type="KEGG" id="tpt:Tpet_1400"/>
<dbReference type="eggNOG" id="COG1947">
    <property type="taxonomic scope" value="Bacteria"/>
</dbReference>
<dbReference type="HOGENOM" id="CLU_053057_2_0_0"/>
<dbReference type="UniPathway" id="UPA00056">
    <property type="reaction ID" value="UER00094"/>
</dbReference>
<dbReference type="Proteomes" id="UP000006558">
    <property type="component" value="Chromosome"/>
</dbReference>
<dbReference type="GO" id="GO:0050515">
    <property type="term" value="F:4-(cytidine 5'-diphospho)-2-C-methyl-D-erythritol kinase activity"/>
    <property type="evidence" value="ECO:0007669"/>
    <property type="project" value="UniProtKB-UniRule"/>
</dbReference>
<dbReference type="GO" id="GO:0005524">
    <property type="term" value="F:ATP binding"/>
    <property type="evidence" value="ECO:0007669"/>
    <property type="project" value="UniProtKB-UniRule"/>
</dbReference>
<dbReference type="GO" id="GO:0019288">
    <property type="term" value="P:isopentenyl diphosphate biosynthetic process, methylerythritol 4-phosphate pathway"/>
    <property type="evidence" value="ECO:0007669"/>
    <property type="project" value="UniProtKB-UniRule"/>
</dbReference>
<dbReference type="GO" id="GO:0016114">
    <property type="term" value="P:terpenoid biosynthetic process"/>
    <property type="evidence" value="ECO:0007669"/>
    <property type="project" value="InterPro"/>
</dbReference>
<dbReference type="Gene3D" id="3.30.230.10">
    <property type="match status" value="1"/>
</dbReference>
<dbReference type="Gene3D" id="3.30.70.890">
    <property type="entry name" value="GHMP kinase, C-terminal domain"/>
    <property type="match status" value="1"/>
</dbReference>
<dbReference type="HAMAP" id="MF_00061">
    <property type="entry name" value="IspE"/>
    <property type="match status" value="1"/>
</dbReference>
<dbReference type="InterPro" id="IPR036554">
    <property type="entry name" value="GHMP_kinase_C_sf"/>
</dbReference>
<dbReference type="InterPro" id="IPR006204">
    <property type="entry name" value="GHMP_kinase_N_dom"/>
</dbReference>
<dbReference type="InterPro" id="IPR004424">
    <property type="entry name" value="IspE"/>
</dbReference>
<dbReference type="InterPro" id="IPR020568">
    <property type="entry name" value="Ribosomal_Su5_D2-typ_SF"/>
</dbReference>
<dbReference type="InterPro" id="IPR014721">
    <property type="entry name" value="Ribsml_uS5_D2-typ_fold_subgr"/>
</dbReference>
<dbReference type="NCBIfam" id="TIGR00154">
    <property type="entry name" value="ispE"/>
    <property type="match status" value="1"/>
</dbReference>
<dbReference type="PANTHER" id="PTHR43527">
    <property type="entry name" value="4-DIPHOSPHOCYTIDYL-2-C-METHYL-D-ERYTHRITOL KINASE, CHLOROPLASTIC"/>
    <property type="match status" value="1"/>
</dbReference>
<dbReference type="PANTHER" id="PTHR43527:SF2">
    <property type="entry name" value="4-DIPHOSPHOCYTIDYL-2-C-METHYL-D-ERYTHRITOL KINASE, CHLOROPLASTIC"/>
    <property type="match status" value="1"/>
</dbReference>
<dbReference type="Pfam" id="PF00288">
    <property type="entry name" value="GHMP_kinases_N"/>
    <property type="match status" value="1"/>
</dbReference>
<dbReference type="PIRSF" id="PIRSF010376">
    <property type="entry name" value="IspE"/>
    <property type="match status" value="1"/>
</dbReference>
<dbReference type="SUPFAM" id="SSF55060">
    <property type="entry name" value="GHMP Kinase, C-terminal domain"/>
    <property type="match status" value="1"/>
</dbReference>
<dbReference type="SUPFAM" id="SSF54211">
    <property type="entry name" value="Ribosomal protein S5 domain 2-like"/>
    <property type="match status" value="1"/>
</dbReference>
<gene>
    <name evidence="1" type="primary">ispE</name>
    <name type="ordered locus">Tpet_1400</name>
</gene>
<name>ISPE_THEP1</name>
<comment type="function">
    <text evidence="1">Catalyzes the phosphorylation of the position 2 hydroxy group of 4-diphosphocytidyl-2C-methyl-D-erythritol.</text>
</comment>
<comment type="catalytic activity">
    <reaction evidence="1">
        <text>4-CDP-2-C-methyl-D-erythritol + ATP = 4-CDP-2-C-methyl-D-erythritol 2-phosphate + ADP + H(+)</text>
        <dbReference type="Rhea" id="RHEA:18437"/>
        <dbReference type="ChEBI" id="CHEBI:15378"/>
        <dbReference type="ChEBI" id="CHEBI:30616"/>
        <dbReference type="ChEBI" id="CHEBI:57823"/>
        <dbReference type="ChEBI" id="CHEBI:57919"/>
        <dbReference type="ChEBI" id="CHEBI:456216"/>
        <dbReference type="EC" id="2.7.1.148"/>
    </reaction>
</comment>
<comment type="pathway">
    <text evidence="1">Isoprenoid biosynthesis; isopentenyl diphosphate biosynthesis via DXP pathway; isopentenyl diphosphate from 1-deoxy-D-xylulose 5-phosphate: step 3/6.</text>
</comment>
<comment type="similarity">
    <text evidence="1">Belongs to the GHMP kinase family. IspE subfamily.</text>
</comment>
<accession>A5IMJ0</accession>
<protein>
    <recommendedName>
        <fullName evidence="1">4-diphosphocytidyl-2-C-methyl-D-erythritol kinase</fullName>
        <shortName evidence="1">CMK</shortName>
        <ecNumber evidence="1">2.7.1.148</ecNumber>
    </recommendedName>
    <alternativeName>
        <fullName evidence="1">4-(cytidine-5'-diphospho)-2-C-methyl-D-erythritol kinase</fullName>
    </alternativeName>
</protein>
<sequence>MVENIGNGSAELVSYAKLNLYLDVLGKRSDEYHEIVGLFQTISLHDTLTVEICDGGFYLESNVALPSDNTIKRAWEMFRKNTGEEFGLKVTLKKKVPVGSGLGGGSSNAAAILRYLGEVFKIPLEDLLNIAAQVGSDVPFFLYGGTALVRGRGEIVEKLEDIEGYSVNLFFPGIHSSTKEMYLSLTPEMYRKGPGRVEELHRAYLERDYEKIRKLSYNVFEKVFLEKHPEVMYGLRNFGDGSIVKMMTGSGSAFFALYPLDEGNYPFVGGV</sequence>